<proteinExistence type="inferred from homology"/>
<organism>
    <name type="scientific">Glaesserella parasuis serovar 5 (strain SH0165)</name>
    <name type="common">Haemophilus parasuis</name>
    <dbReference type="NCBI Taxonomy" id="557723"/>
    <lineage>
        <taxon>Bacteria</taxon>
        <taxon>Pseudomonadati</taxon>
        <taxon>Pseudomonadota</taxon>
        <taxon>Gammaproteobacteria</taxon>
        <taxon>Pasteurellales</taxon>
        <taxon>Pasteurellaceae</taxon>
        <taxon>Glaesserella</taxon>
    </lineage>
</organism>
<comment type="function">
    <text evidence="1">An aminoacyl-tRNA editing enzyme that deacylates mischarged D-aminoacyl-tRNAs. Also deacylates mischarged glycyl-tRNA(Ala), protecting cells against glycine mischarging by AlaRS. Acts via tRNA-based rather than protein-based catalysis; rejects L-amino acids rather than detecting D-amino acids in the active site. By recycling D-aminoacyl-tRNA to D-amino acids and free tRNA molecules, this enzyme counteracts the toxicity associated with the formation of D-aminoacyl-tRNA entities in vivo and helps enforce protein L-homochirality.</text>
</comment>
<comment type="catalytic activity">
    <reaction evidence="1">
        <text>glycyl-tRNA(Ala) + H2O = tRNA(Ala) + glycine + H(+)</text>
        <dbReference type="Rhea" id="RHEA:53744"/>
        <dbReference type="Rhea" id="RHEA-COMP:9657"/>
        <dbReference type="Rhea" id="RHEA-COMP:13640"/>
        <dbReference type="ChEBI" id="CHEBI:15377"/>
        <dbReference type="ChEBI" id="CHEBI:15378"/>
        <dbReference type="ChEBI" id="CHEBI:57305"/>
        <dbReference type="ChEBI" id="CHEBI:78442"/>
        <dbReference type="ChEBI" id="CHEBI:78522"/>
        <dbReference type="EC" id="3.1.1.96"/>
    </reaction>
</comment>
<comment type="catalytic activity">
    <reaction evidence="1">
        <text>a D-aminoacyl-tRNA + H2O = a tRNA + a D-alpha-amino acid + H(+)</text>
        <dbReference type="Rhea" id="RHEA:13953"/>
        <dbReference type="Rhea" id="RHEA-COMP:10123"/>
        <dbReference type="Rhea" id="RHEA-COMP:10124"/>
        <dbReference type="ChEBI" id="CHEBI:15377"/>
        <dbReference type="ChEBI" id="CHEBI:15378"/>
        <dbReference type="ChEBI" id="CHEBI:59871"/>
        <dbReference type="ChEBI" id="CHEBI:78442"/>
        <dbReference type="ChEBI" id="CHEBI:79333"/>
        <dbReference type="EC" id="3.1.1.96"/>
    </reaction>
</comment>
<comment type="subunit">
    <text evidence="1">Homodimer.</text>
</comment>
<comment type="subcellular location">
    <subcellularLocation>
        <location evidence="1">Cytoplasm</location>
    </subcellularLocation>
</comment>
<comment type="domain">
    <text evidence="1">A Gly-cisPro motif from one monomer fits into the active site of the other monomer to allow specific chiral rejection of L-amino acids.</text>
</comment>
<comment type="similarity">
    <text evidence="1">Belongs to the DTD family.</text>
</comment>
<protein>
    <recommendedName>
        <fullName evidence="1">D-aminoacyl-tRNA deacylase</fullName>
        <shortName evidence="1">DTD</shortName>
        <ecNumber evidence="1">3.1.1.96</ecNumber>
    </recommendedName>
    <alternativeName>
        <fullName evidence="1">Gly-tRNA(Ala) deacylase</fullName>
    </alternativeName>
</protein>
<feature type="chain" id="PRO_1000146199" description="D-aminoacyl-tRNA deacylase">
    <location>
        <begin position="1"/>
        <end position="144"/>
    </location>
</feature>
<feature type="short sequence motif" description="Gly-cisPro motif, important for rejection of L-amino acids" evidence="1">
    <location>
        <begin position="136"/>
        <end position="137"/>
    </location>
</feature>
<name>DTD_GLAP5</name>
<sequence length="144" mass="15848">MIGLIQRVKWAKVEVDNQTVGEISMGLLVLLGVEQGDDQAKADRLLEKVLNYRVFADEQGKMNLNVQQAGGSLLVVSQFTLAADTQKGLRPSFSRGATPALAQALYDYFHQQAALKIHTQTGRFAADMQVSLQNDGPVTFWLQV</sequence>
<reference key="1">
    <citation type="journal article" date="2009" name="J. Bacteriol.">
        <title>Complete genome sequence of Haemophilus parasuis SH0165.</title>
        <authorList>
            <person name="Yue M."/>
            <person name="Yang F."/>
            <person name="Yang J."/>
            <person name="Bei W."/>
            <person name="Cai X."/>
            <person name="Chen L."/>
            <person name="Dong J."/>
            <person name="Zhou R."/>
            <person name="Jin M."/>
            <person name="Jin Q."/>
            <person name="Chen H."/>
        </authorList>
    </citation>
    <scope>NUCLEOTIDE SEQUENCE [LARGE SCALE GENOMIC DNA]</scope>
    <source>
        <strain>SH0165</strain>
    </source>
</reference>
<keyword id="KW-0963">Cytoplasm</keyword>
<keyword id="KW-0378">Hydrolase</keyword>
<keyword id="KW-1185">Reference proteome</keyword>
<keyword id="KW-0694">RNA-binding</keyword>
<keyword id="KW-0820">tRNA-binding</keyword>
<dbReference type="EC" id="3.1.1.96" evidence="1"/>
<dbReference type="EMBL" id="CP001321">
    <property type="protein sequence ID" value="ACL32955.1"/>
    <property type="molecule type" value="Genomic_DNA"/>
</dbReference>
<dbReference type="RefSeq" id="WP_010787131.1">
    <property type="nucleotide sequence ID" value="NC_011852.1"/>
</dbReference>
<dbReference type="SMR" id="B8F6K3"/>
<dbReference type="STRING" id="557723.HAPS_1375"/>
<dbReference type="KEGG" id="hap:HAPS_1375"/>
<dbReference type="PATRIC" id="fig|557723.8.peg.1350"/>
<dbReference type="HOGENOM" id="CLU_076901_1_1_6"/>
<dbReference type="Proteomes" id="UP000006743">
    <property type="component" value="Chromosome"/>
</dbReference>
<dbReference type="GO" id="GO:0005737">
    <property type="term" value="C:cytoplasm"/>
    <property type="evidence" value="ECO:0007669"/>
    <property type="project" value="UniProtKB-SubCell"/>
</dbReference>
<dbReference type="GO" id="GO:0051500">
    <property type="term" value="F:D-tyrosyl-tRNA(Tyr) deacylase activity"/>
    <property type="evidence" value="ECO:0007669"/>
    <property type="project" value="TreeGrafter"/>
</dbReference>
<dbReference type="GO" id="GO:0106026">
    <property type="term" value="F:Gly-tRNA(Ala) deacylase activity"/>
    <property type="evidence" value="ECO:0007669"/>
    <property type="project" value="UniProtKB-UniRule"/>
</dbReference>
<dbReference type="GO" id="GO:0043908">
    <property type="term" value="F:Ser(Gly)-tRNA(Ala) hydrolase activity"/>
    <property type="evidence" value="ECO:0007669"/>
    <property type="project" value="UniProtKB-UniRule"/>
</dbReference>
<dbReference type="GO" id="GO:0000049">
    <property type="term" value="F:tRNA binding"/>
    <property type="evidence" value="ECO:0007669"/>
    <property type="project" value="UniProtKB-UniRule"/>
</dbReference>
<dbReference type="GO" id="GO:0019478">
    <property type="term" value="P:D-amino acid catabolic process"/>
    <property type="evidence" value="ECO:0007669"/>
    <property type="project" value="UniProtKB-UniRule"/>
</dbReference>
<dbReference type="CDD" id="cd00563">
    <property type="entry name" value="Dtyr_deacylase"/>
    <property type="match status" value="1"/>
</dbReference>
<dbReference type="FunFam" id="3.50.80.10:FF:000001">
    <property type="entry name" value="D-aminoacyl-tRNA deacylase"/>
    <property type="match status" value="1"/>
</dbReference>
<dbReference type="Gene3D" id="3.50.80.10">
    <property type="entry name" value="D-tyrosyl-tRNA(Tyr) deacylase"/>
    <property type="match status" value="1"/>
</dbReference>
<dbReference type="HAMAP" id="MF_00518">
    <property type="entry name" value="Deacylase_Dtd"/>
    <property type="match status" value="1"/>
</dbReference>
<dbReference type="InterPro" id="IPR003732">
    <property type="entry name" value="Daa-tRNA_deacyls_DTD"/>
</dbReference>
<dbReference type="InterPro" id="IPR023509">
    <property type="entry name" value="DTD-like_sf"/>
</dbReference>
<dbReference type="NCBIfam" id="TIGR00256">
    <property type="entry name" value="D-aminoacyl-tRNA deacylase"/>
    <property type="match status" value="1"/>
</dbReference>
<dbReference type="PANTHER" id="PTHR10472:SF5">
    <property type="entry name" value="D-AMINOACYL-TRNA DEACYLASE 1"/>
    <property type="match status" value="1"/>
</dbReference>
<dbReference type="PANTHER" id="PTHR10472">
    <property type="entry name" value="D-TYROSYL-TRNA TYR DEACYLASE"/>
    <property type="match status" value="1"/>
</dbReference>
<dbReference type="Pfam" id="PF02580">
    <property type="entry name" value="Tyr_Deacylase"/>
    <property type="match status" value="1"/>
</dbReference>
<dbReference type="SUPFAM" id="SSF69500">
    <property type="entry name" value="DTD-like"/>
    <property type="match status" value="1"/>
</dbReference>
<gene>
    <name evidence="1" type="primary">dtd</name>
    <name type="ordered locus">HAPS_1375</name>
</gene>
<evidence type="ECO:0000255" key="1">
    <source>
        <dbReference type="HAMAP-Rule" id="MF_00518"/>
    </source>
</evidence>
<accession>B8F6K3</accession>